<name>ML423_ARATH</name>
<comment type="similarity">
    <text evidence="1">Belongs to the MLP family.</text>
</comment>
<comment type="sequence caution" evidence="1">
    <conflict type="erroneous gene model prediction">
        <sequence resource="EMBL-CDS" id="AAF87152"/>
    </conflict>
    <text>The predicted gene At1g24000 has been split into 3 genes: At1g24000, At1g24010 and At1g24020.</text>
</comment>
<reference key="1">
    <citation type="submission" date="2001-01" db="EMBL/GenBank/DDBJ databases">
        <title>Molecular and phylogenetic analysis of a gene family in Arabidopsis thaliana with similarities to major latex, pathogenesis-related and ripening-induced proteins.</title>
        <authorList>
            <person name="Muller S."/>
            <person name="Klimt S."/>
            <person name="Hauser M.T."/>
        </authorList>
    </citation>
    <scope>NUCLEOTIDE SEQUENCE [GENOMIC DNA]</scope>
    <source>
        <strain>cv. Columbia</strain>
    </source>
</reference>
<reference key="2">
    <citation type="journal article" date="2000" name="Nature">
        <title>Sequence and analysis of chromosome 1 of the plant Arabidopsis thaliana.</title>
        <authorList>
            <person name="Theologis A."/>
            <person name="Ecker J.R."/>
            <person name="Palm C.J."/>
            <person name="Federspiel N.A."/>
            <person name="Kaul S."/>
            <person name="White O."/>
            <person name="Alonso J."/>
            <person name="Altafi H."/>
            <person name="Araujo R."/>
            <person name="Bowman C.L."/>
            <person name="Brooks S.Y."/>
            <person name="Buehler E."/>
            <person name="Chan A."/>
            <person name="Chao Q."/>
            <person name="Chen H."/>
            <person name="Cheuk R.F."/>
            <person name="Chin C.W."/>
            <person name="Chung M.K."/>
            <person name="Conn L."/>
            <person name="Conway A.B."/>
            <person name="Conway A.R."/>
            <person name="Creasy T.H."/>
            <person name="Dewar K."/>
            <person name="Dunn P."/>
            <person name="Etgu P."/>
            <person name="Feldblyum T.V."/>
            <person name="Feng J.-D."/>
            <person name="Fong B."/>
            <person name="Fujii C.Y."/>
            <person name="Gill J.E."/>
            <person name="Goldsmith A.D."/>
            <person name="Haas B."/>
            <person name="Hansen N.F."/>
            <person name="Hughes B."/>
            <person name="Huizar L."/>
            <person name="Hunter J.L."/>
            <person name="Jenkins J."/>
            <person name="Johnson-Hopson C."/>
            <person name="Khan S."/>
            <person name="Khaykin E."/>
            <person name="Kim C.J."/>
            <person name="Koo H.L."/>
            <person name="Kremenetskaia I."/>
            <person name="Kurtz D.B."/>
            <person name="Kwan A."/>
            <person name="Lam B."/>
            <person name="Langin-Hooper S."/>
            <person name="Lee A."/>
            <person name="Lee J.M."/>
            <person name="Lenz C.A."/>
            <person name="Li J.H."/>
            <person name="Li Y.-P."/>
            <person name="Lin X."/>
            <person name="Liu S.X."/>
            <person name="Liu Z.A."/>
            <person name="Luros J.S."/>
            <person name="Maiti R."/>
            <person name="Marziali A."/>
            <person name="Militscher J."/>
            <person name="Miranda M."/>
            <person name="Nguyen M."/>
            <person name="Nierman W.C."/>
            <person name="Osborne B.I."/>
            <person name="Pai G."/>
            <person name="Peterson J."/>
            <person name="Pham P.K."/>
            <person name="Rizzo M."/>
            <person name="Rooney T."/>
            <person name="Rowley D."/>
            <person name="Sakano H."/>
            <person name="Salzberg S.L."/>
            <person name="Schwartz J.R."/>
            <person name="Shinn P."/>
            <person name="Southwick A.M."/>
            <person name="Sun H."/>
            <person name="Tallon L.J."/>
            <person name="Tambunga G."/>
            <person name="Toriumi M.J."/>
            <person name="Town C.D."/>
            <person name="Utterback T."/>
            <person name="Van Aken S."/>
            <person name="Vaysberg M."/>
            <person name="Vysotskaia V.S."/>
            <person name="Walker M."/>
            <person name="Wu D."/>
            <person name="Yu G."/>
            <person name="Fraser C.M."/>
            <person name="Venter J.C."/>
            <person name="Davis R.W."/>
        </authorList>
    </citation>
    <scope>NUCLEOTIDE SEQUENCE [LARGE SCALE GENOMIC DNA]</scope>
    <source>
        <strain>cv. Columbia</strain>
    </source>
</reference>
<reference key="3">
    <citation type="journal article" date="2017" name="Plant J.">
        <title>Araport11: a complete reannotation of the Arabidopsis thaliana reference genome.</title>
        <authorList>
            <person name="Cheng C.Y."/>
            <person name="Krishnakumar V."/>
            <person name="Chan A.P."/>
            <person name="Thibaud-Nissen F."/>
            <person name="Schobel S."/>
            <person name="Town C.D."/>
        </authorList>
    </citation>
    <scope>GENOME REANNOTATION</scope>
    <source>
        <strain>cv. Columbia</strain>
    </source>
</reference>
<reference key="4">
    <citation type="journal article" date="2003" name="Science">
        <title>Empirical analysis of transcriptional activity in the Arabidopsis genome.</title>
        <authorList>
            <person name="Yamada K."/>
            <person name="Lim J."/>
            <person name="Dale J.M."/>
            <person name="Chen H."/>
            <person name="Shinn P."/>
            <person name="Palm C.J."/>
            <person name="Southwick A.M."/>
            <person name="Wu H.C."/>
            <person name="Kim C.J."/>
            <person name="Nguyen M."/>
            <person name="Pham P.K."/>
            <person name="Cheuk R.F."/>
            <person name="Karlin-Newmann G."/>
            <person name="Liu S.X."/>
            <person name="Lam B."/>
            <person name="Sakano H."/>
            <person name="Wu T."/>
            <person name="Yu G."/>
            <person name="Miranda M."/>
            <person name="Quach H.L."/>
            <person name="Tripp M."/>
            <person name="Chang C.H."/>
            <person name="Lee J.M."/>
            <person name="Toriumi M.J."/>
            <person name="Chan M.M."/>
            <person name="Tang C.C."/>
            <person name="Onodera C.S."/>
            <person name="Deng J.M."/>
            <person name="Akiyama K."/>
            <person name="Ansari Y."/>
            <person name="Arakawa T."/>
            <person name="Banh J."/>
            <person name="Banno F."/>
            <person name="Bowser L."/>
            <person name="Brooks S.Y."/>
            <person name="Carninci P."/>
            <person name="Chao Q."/>
            <person name="Choy N."/>
            <person name="Enju A."/>
            <person name="Goldsmith A.D."/>
            <person name="Gurjal M."/>
            <person name="Hansen N.F."/>
            <person name="Hayashizaki Y."/>
            <person name="Johnson-Hopson C."/>
            <person name="Hsuan V.W."/>
            <person name="Iida K."/>
            <person name="Karnes M."/>
            <person name="Khan S."/>
            <person name="Koesema E."/>
            <person name="Ishida J."/>
            <person name="Jiang P.X."/>
            <person name="Jones T."/>
            <person name="Kawai J."/>
            <person name="Kamiya A."/>
            <person name="Meyers C."/>
            <person name="Nakajima M."/>
            <person name="Narusaka M."/>
            <person name="Seki M."/>
            <person name="Sakurai T."/>
            <person name="Satou M."/>
            <person name="Tamse R."/>
            <person name="Vaysberg M."/>
            <person name="Wallender E.K."/>
            <person name="Wong C."/>
            <person name="Yamamura Y."/>
            <person name="Yuan S."/>
            <person name="Shinozaki K."/>
            <person name="Davis R.W."/>
            <person name="Theologis A."/>
            <person name="Ecker J.R."/>
        </authorList>
    </citation>
    <scope>NUCLEOTIDE SEQUENCE [LARGE SCALE MRNA]</scope>
    <source>
        <strain>cv. Columbia</strain>
    </source>
</reference>
<reference key="5">
    <citation type="submission" date="2002-03" db="EMBL/GenBank/DDBJ databases">
        <title>Full-length cDNA from Arabidopsis thaliana.</title>
        <authorList>
            <person name="Brover V.V."/>
            <person name="Troukhan M.E."/>
            <person name="Alexandrov N.A."/>
            <person name="Lu Y.-P."/>
            <person name="Flavell R.B."/>
            <person name="Feldmann K.A."/>
        </authorList>
    </citation>
    <scope>NUCLEOTIDE SEQUENCE [LARGE SCALE MRNA]</scope>
</reference>
<gene>
    <name type="primary">MLP423</name>
    <name type="ordered locus">At1g24020</name>
    <name type="ORF">T23E23.17</name>
    <name type="ORF">T23E23_22</name>
</gene>
<organism>
    <name type="scientific">Arabidopsis thaliana</name>
    <name type="common">Mouse-ear cress</name>
    <dbReference type="NCBI Taxonomy" id="3702"/>
    <lineage>
        <taxon>Eukaryota</taxon>
        <taxon>Viridiplantae</taxon>
        <taxon>Streptophyta</taxon>
        <taxon>Embryophyta</taxon>
        <taxon>Tracheophyta</taxon>
        <taxon>Spermatophyta</taxon>
        <taxon>Magnoliopsida</taxon>
        <taxon>eudicotyledons</taxon>
        <taxon>Gunneridae</taxon>
        <taxon>Pentapetalae</taxon>
        <taxon>rosids</taxon>
        <taxon>malvids</taxon>
        <taxon>Brassicales</taxon>
        <taxon>Brassicaceae</taxon>
        <taxon>Camelineae</taxon>
        <taxon>Arabidopsis</taxon>
    </lineage>
</organism>
<evidence type="ECO:0000305" key="1"/>
<accession>Q93VR4</accession>
<accession>Q8L9L8</accession>
<accession>Q9LR93</accession>
<sequence length="155" mass="17054">MGLSGVLHVEVEVKSPAEKFWVALGDGINLFPKAFPNDYKTIQVLAGDGNAPGSIRLITYGEGSPLVKISAERIEAVDLENKSMSYSIIGGEMLEYYKTFKGTITVIPKDGGSLLKWSGEFEKTAHEIDDPHVIKDFAVKNFKEIDEYLLKQTSA</sequence>
<keyword id="KW-1185">Reference proteome</keyword>
<proteinExistence type="evidence at transcript level"/>
<dbReference type="EMBL" id="AJ306136">
    <property type="protein sequence ID" value="CAC83600.1"/>
    <property type="molecule type" value="Genomic_DNA"/>
</dbReference>
<dbReference type="EMBL" id="AC002423">
    <property type="protein sequence ID" value="AAF87152.1"/>
    <property type="status" value="ALT_SEQ"/>
    <property type="molecule type" value="Genomic_DNA"/>
</dbReference>
<dbReference type="EMBL" id="CP002684">
    <property type="protein sequence ID" value="AEE30466.1"/>
    <property type="molecule type" value="Genomic_DNA"/>
</dbReference>
<dbReference type="EMBL" id="CP002684">
    <property type="protein sequence ID" value="AEE30467.1"/>
    <property type="molecule type" value="Genomic_DNA"/>
</dbReference>
<dbReference type="EMBL" id="AY052277">
    <property type="protein sequence ID" value="AAK96470.1"/>
    <property type="molecule type" value="mRNA"/>
</dbReference>
<dbReference type="EMBL" id="AY061912">
    <property type="protein sequence ID" value="AAL31239.1"/>
    <property type="molecule type" value="mRNA"/>
</dbReference>
<dbReference type="EMBL" id="AY088360">
    <property type="protein sequence ID" value="AAM65899.1"/>
    <property type="molecule type" value="mRNA"/>
</dbReference>
<dbReference type="RefSeq" id="NP_001185075.1">
    <property type="nucleotide sequence ID" value="NM_001198146.1"/>
</dbReference>
<dbReference type="RefSeq" id="NP_173813.1">
    <property type="nucleotide sequence ID" value="NM_102249.6"/>
</dbReference>
<dbReference type="SMR" id="Q93VR4"/>
<dbReference type="BioGRID" id="24252">
    <property type="interactions" value="2"/>
</dbReference>
<dbReference type="FunCoup" id="Q93VR4">
    <property type="interactions" value="555"/>
</dbReference>
<dbReference type="STRING" id="3702.Q93VR4"/>
<dbReference type="iPTMnet" id="Q93VR4"/>
<dbReference type="PaxDb" id="3702-AT1G24020.2"/>
<dbReference type="ProteomicsDB" id="250932"/>
<dbReference type="EnsemblPlants" id="AT1G24020.1">
    <property type="protein sequence ID" value="AT1G24020.1"/>
    <property type="gene ID" value="AT1G24020"/>
</dbReference>
<dbReference type="EnsemblPlants" id="AT1G24020.2">
    <property type="protein sequence ID" value="AT1G24020.2"/>
    <property type="gene ID" value="AT1G24020"/>
</dbReference>
<dbReference type="GeneID" id="839014"/>
<dbReference type="Gramene" id="AT1G24020.1">
    <property type="protein sequence ID" value="AT1G24020.1"/>
    <property type="gene ID" value="AT1G24020"/>
</dbReference>
<dbReference type="Gramene" id="AT1G24020.2">
    <property type="protein sequence ID" value="AT1G24020.2"/>
    <property type="gene ID" value="AT1G24020"/>
</dbReference>
<dbReference type="KEGG" id="ath:AT1G24020"/>
<dbReference type="Araport" id="AT1G24020"/>
<dbReference type="TAIR" id="AT1G24020">
    <property type="gene designation" value="MLP423"/>
</dbReference>
<dbReference type="eggNOG" id="ENOG502RZUQ">
    <property type="taxonomic scope" value="Eukaryota"/>
</dbReference>
<dbReference type="HOGENOM" id="CLU_081988_1_1_1"/>
<dbReference type="InParanoid" id="Q93VR4"/>
<dbReference type="OMA" id="HDYKSID"/>
<dbReference type="PhylomeDB" id="Q93VR4"/>
<dbReference type="CD-CODE" id="4299E36E">
    <property type="entry name" value="Nucleolus"/>
</dbReference>
<dbReference type="PRO" id="PR:Q93VR4"/>
<dbReference type="Proteomes" id="UP000006548">
    <property type="component" value="Chromosome 1"/>
</dbReference>
<dbReference type="ExpressionAtlas" id="Q93VR4">
    <property type="expression patterns" value="baseline and differential"/>
</dbReference>
<dbReference type="GO" id="GO:0005829">
    <property type="term" value="C:cytosol"/>
    <property type="evidence" value="ECO:0007005"/>
    <property type="project" value="TAIR"/>
</dbReference>
<dbReference type="GO" id="GO:0005634">
    <property type="term" value="C:nucleus"/>
    <property type="evidence" value="ECO:0007005"/>
    <property type="project" value="TAIR"/>
</dbReference>
<dbReference type="GO" id="GO:0010427">
    <property type="term" value="F:abscisic acid binding"/>
    <property type="evidence" value="ECO:0007669"/>
    <property type="project" value="InterPro"/>
</dbReference>
<dbReference type="GO" id="GO:0004864">
    <property type="term" value="F:protein phosphatase inhibitor activity"/>
    <property type="evidence" value="ECO:0007669"/>
    <property type="project" value="InterPro"/>
</dbReference>
<dbReference type="GO" id="GO:0038023">
    <property type="term" value="F:signaling receptor activity"/>
    <property type="evidence" value="ECO:0007669"/>
    <property type="project" value="InterPro"/>
</dbReference>
<dbReference type="GO" id="GO:0009738">
    <property type="term" value="P:abscisic acid-activated signaling pathway"/>
    <property type="evidence" value="ECO:0007669"/>
    <property type="project" value="InterPro"/>
</dbReference>
<dbReference type="GO" id="GO:0006952">
    <property type="term" value="P:defense response"/>
    <property type="evidence" value="ECO:0007669"/>
    <property type="project" value="InterPro"/>
</dbReference>
<dbReference type="CDD" id="cd07816">
    <property type="entry name" value="Bet_v1-like"/>
    <property type="match status" value="1"/>
</dbReference>
<dbReference type="FunFam" id="3.30.530.20:FF:000094">
    <property type="entry name" value="Bet v I allergen family protein"/>
    <property type="match status" value="1"/>
</dbReference>
<dbReference type="Gene3D" id="3.30.530.20">
    <property type="match status" value="1"/>
</dbReference>
<dbReference type="InterPro" id="IPR000916">
    <property type="entry name" value="Bet_v_I/MLP"/>
</dbReference>
<dbReference type="InterPro" id="IPR024949">
    <property type="entry name" value="Bet_v_I_allergen"/>
</dbReference>
<dbReference type="InterPro" id="IPR051761">
    <property type="entry name" value="MLP-like_ligand-binding"/>
</dbReference>
<dbReference type="InterPro" id="IPR023393">
    <property type="entry name" value="START-like_dom_sf"/>
</dbReference>
<dbReference type="PANTHER" id="PTHR31907">
    <property type="entry name" value="MLP-LIKE PROTEIN 423"/>
    <property type="match status" value="1"/>
</dbReference>
<dbReference type="Pfam" id="PF00407">
    <property type="entry name" value="Bet_v_1"/>
    <property type="match status" value="1"/>
</dbReference>
<dbReference type="PRINTS" id="PR00634">
    <property type="entry name" value="BETALLERGEN"/>
</dbReference>
<dbReference type="SMART" id="SM01037">
    <property type="entry name" value="Bet_v_1"/>
    <property type="match status" value="1"/>
</dbReference>
<dbReference type="SUPFAM" id="SSF55961">
    <property type="entry name" value="Bet v1-like"/>
    <property type="match status" value="1"/>
</dbReference>
<protein>
    <recommendedName>
        <fullName>MLP-like protein 423</fullName>
    </recommendedName>
</protein>
<feature type="chain" id="PRO_0000210076" description="MLP-like protein 423">
    <location>
        <begin position="1"/>
        <end position="155"/>
    </location>
</feature>
<feature type="sequence conflict" description="In Ref. 5; AAM65899." evidence="1" ref="5">
    <original>D</original>
    <variation>N</variation>
    <location>
        <position position="110"/>
    </location>
</feature>